<accession>P22020</accession>
<keyword id="KW-0238">DNA-binding</keyword>
<keyword id="KW-0371">Homeobox</keyword>
<keyword id="KW-0539">Nucleus</keyword>
<dbReference type="EMBL" id="X53902">
    <property type="protein sequence ID" value="CAA37870.1"/>
    <property type="molecule type" value="Genomic_DNA"/>
</dbReference>
<dbReference type="EMBL" id="X54071">
    <property type="protein sequence ID" value="CAA38002.1"/>
    <property type="molecule type" value="Genomic_DNA"/>
</dbReference>
<dbReference type="PIR" id="E36671">
    <property type="entry name" value="E36671"/>
</dbReference>
<dbReference type="SMR" id="P22020"/>
<dbReference type="VEuPathDB" id="FungiDB:UMAG_12052"/>
<dbReference type="GO" id="GO:0005634">
    <property type="term" value="C:nucleus"/>
    <property type="evidence" value="ECO:0007669"/>
    <property type="project" value="UniProtKB-SubCell"/>
</dbReference>
<dbReference type="GO" id="GO:0003677">
    <property type="term" value="F:DNA binding"/>
    <property type="evidence" value="ECO:0007669"/>
    <property type="project" value="UniProtKB-KW"/>
</dbReference>
<dbReference type="GO" id="GO:0006355">
    <property type="term" value="P:regulation of DNA-templated transcription"/>
    <property type="evidence" value="ECO:0007669"/>
    <property type="project" value="InterPro"/>
</dbReference>
<dbReference type="CDD" id="cd00086">
    <property type="entry name" value="homeodomain"/>
    <property type="match status" value="1"/>
</dbReference>
<dbReference type="Gene3D" id="1.10.10.60">
    <property type="entry name" value="Homeodomain-like"/>
    <property type="match status" value="1"/>
</dbReference>
<dbReference type="InterPro" id="IPR001356">
    <property type="entry name" value="HD"/>
</dbReference>
<dbReference type="InterPro" id="IPR009057">
    <property type="entry name" value="Homeodomain-like_sf"/>
</dbReference>
<dbReference type="InterPro" id="IPR008422">
    <property type="entry name" value="KN_HD"/>
</dbReference>
<dbReference type="InterPro" id="IPR008888">
    <property type="entry name" value="Ustilago_mating"/>
</dbReference>
<dbReference type="Pfam" id="PF05920">
    <property type="entry name" value="Homeobox_KN"/>
    <property type="match status" value="1"/>
</dbReference>
<dbReference type="Pfam" id="PF05722">
    <property type="entry name" value="Ustilago_mating"/>
    <property type="match status" value="1"/>
</dbReference>
<dbReference type="SUPFAM" id="SSF46689">
    <property type="entry name" value="Homeodomain-like"/>
    <property type="match status" value="1"/>
</dbReference>
<dbReference type="PROSITE" id="PS50071">
    <property type="entry name" value="HOMEOBOX_2"/>
    <property type="match status" value="1"/>
</dbReference>
<protein>
    <recommendedName>
        <fullName>Mating-type locus allele B6 protein</fullName>
    </recommendedName>
</protein>
<reference key="1">
    <citation type="journal article" date="1990" name="Genes Dev.">
        <title>The b mating-type locus of Ustilago maydis contains variable and constant regions.</title>
        <authorList>
            <person name="Kronstad J.W."/>
            <person name="Leong S.A."/>
        </authorList>
    </citation>
    <scope>NUCLEOTIDE SEQUENCE [GENOMIC DNA]</scope>
    <source>
        <strain>ATCC 22505 / 50</strain>
    </source>
</reference>
<proteinExistence type="inferred from homology"/>
<comment type="function">
    <text>The B locus has at least 25 alleles, and any combination of two different B alleles yields a multimeric regulatory protein, that activates genes responsible for the pathogenicity and for the sexual development of the fungus within the corn plant.</text>
</comment>
<comment type="subcellular location">
    <subcellularLocation>
        <location>Nucleus</location>
    </subcellularLocation>
</comment>
<comment type="similarity">
    <text evidence="4">Belongs to the TALE/M-ATYP homeobox family.</text>
</comment>
<name>B6_MYCMD</name>
<sequence length="410" mass="46517">MSRDPKLSLSKFLECLNEIEHEFLRDKVEHRPVLVRKLQELQQKTPKHVTNLPNDPETIQQIHQIAHRLEVAVKVFLHIDRKFVSLRSDVVEDTSKALQEVNVASPAVEYRNLSEDLPAYHMRKHFLHTLDSPYPTQEEKETLVRLTNESTARVGQSSVNRPPLEVHQLTLWFINARRRSGWSHILKKFAREDRSRMKHLVRAKLSSSNQSTPPSLTSEKPSDDLDVVLSDNLGRPLTLADKQQFEDDWASMISWIKYGVKEKVGDWVYDLCAASKKTPKPGMPRPVTTVAKRQPARKTKPAAKPKSRTANPRASTTPSIDSTLDSSKLESTPELSMCSTADTSFSTFGSSLSMSHYDPFQYGNDILQSPTFKARGNRKVKALPKRAGKQQPDEIDNGKIPFFCLSIAFV</sequence>
<evidence type="ECO:0000255" key="1"/>
<evidence type="ECO:0000255" key="2">
    <source>
        <dbReference type="PROSITE-ProRule" id="PRU00108"/>
    </source>
</evidence>
<evidence type="ECO:0000256" key="3">
    <source>
        <dbReference type="SAM" id="MobiDB-lite"/>
    </source>
</evidence>
<evidence type="ECO:0000305" key="4"/>
<organism>
    <name type="scientific">Mycosarcoma maydis</name>
    <name type="common">Corn smut fungus</name>
    <name type="synonym">Ustilago maydis</name>
    <dbReference type="NCBI Taxonomy" id="5270"/>
    <lineage>
        <taxon>Eukaryota</taxon>
        <taxon>Fungi</taxon>
        <taxon>Dikarya</taxon>
        <taxon>Basidiomycota</taxon>
        <taxon>Ustilaginomycotina</taxon>
        <taxon>Ustilaginomycetes</taxon>
        <taxon>Ustilaginales</taxon>
        <taxon>Ustilaginaceae</taxon>
        <taxon>Mycosarcoma</taxon>
    </lineage>
</organism>
<feature type="chain" id="PRO_0000049406" description="Mating-type locus allele B6 protein">
    <location>
        <begin position="1"/>
        <end position="410"/>
    </location>
</feature>
<feature type="DNA-binding region" description="Homeobox; TALE-type" evidence="2">
    <location>
        <begin position="107"/>
        <end position="184"/>
    </location>
</feature>
<feature type="region of interest" description="Variable domain between B alleles">
    <location>
        <begin position="1"/>
        <end position="110"/>
    </location>
</feature>
<feature type="region of interest" description="Highly conserved between B alleles">
    <location>
        <begin position="111"/>
        <end position="410"/>
    </location>
</feature>
<feature type="region of interest" description="Disordered" evidence="3">
    <location>
        <begin position="202"/>
        <end position="224"/>
    </location>
</feature>
<feature type="region of interest" description="Disordered" evidence="3">
    <location>
        <begin position="278"/>
        <end position="335"/>
    </location>
</feature>
<feature type="region of interest" description="Not essential for B6 function">
    <location>
        <begin position="333"/>
        <end position="410"/>
    </location>
</feature>
<feature type="region of interest" description="Disordered" evidence="3">
    <location>
        <begin position="373"/>
        <end position="393"/>
    </location>
</feature>
<feature type="short sequence motif" description="Nuclear localization signal" evidence="1">
    <location>
        <begin position="276"/>
        <end position="308"/>
    </location>
</feature>
<feature type="compositionally biased region" description="Polar residues" evidence="3">
    <location>
        <begin position="205"/>
        <end position="219"/>
    </location>
</feature>
<feature type="compositionally biased region" description="Basic residues" evidence="3">
    <location>
        <begin position="294"/>
        <end position="307"/>
    </location>
</feature>
<feature type="compositionally biased region" description="Polar residues" evidence="3">
    <location>
        <begin position="312"/>
        <end position="335"/>
    </location>
</feature>
<feature type="compositionally biased region" description="Basic residues" evidence="3">
    <location>
        <begin position="375"/>
        <end position="388"/>
    </location>
</feature>